<protein>
    <recommendedName>
        <fullName evidence="2">Small ribosomal subunit protein uS2A</fullName>
    </recommendedName>
    <alternativeName>
        <fullName evidence="4">40S ribosomal protein S0-A</fullName>
    </alternativeName>
    <alternativeName>
        <fullName>Nucleic acid-binding protein NAB1A</fullName>
    </alternativeName>
</protein>
<dbReference type="EMBL" id="CH408044">
    <property type="protein sequence ID" value="EDV10043.1"/>
    <property type="molecule type" value="Genomic_DNA"/>
</dbReference>
<dbReference type="EMDB" id="EMD-10397"/>
<dbReference type="EMDB" id="EMD-10537"/>
<dbReference type="EMDB" id="EMD-14861"/>
<dbReference type="EMDB" id="EMD-14921"/>
<dbReference type="EMDB" id="EMD-14978"/>
<dbReference type="EMDB" id="EMD-16182"/>
<dbReference type="EMDB" id="EMD-16541"/>
<dbReference type="SMR" id="B3LI22"/>
<dbReference type="IntAct" id="B3LI22">
    <property type="interactions" value="1"/>
</dbReference>
<dbReference type="HOGENOM" id="CLU_058171_2_0_1"/>
<dbReference type="OrthoDB" id="3300at4893"/>
<dbReference type="Proteomes" id="UP000008335">
    <property type="component" value="Unassembled WGS sequence"/>
</dbReference>
<dbReference type="GO" id="GO:0022627">
    <property type="term" value="C:cytosolic small ribosomal subunit"/>
    <property type="evidence" value="ECO:0007669"/>
    <property type="project" value="UniProtKB-UniRule"/>
</dbReference>
<dbReference type="GO" id="GO:0003735">
    <property type="term" value="F:structural constituent of ribosome"/>
    <property type="evidence" value="ECO:0007669"/>
    <property type="project" value="UniProtKB-UniRule"/>
</dbReference>
<dbReference type="GO" id="GO:0000028">
    <property type="term" value="P:ribosomal small subunit assembly"/>
    <property type="evidence" value="ECO:0007669"/>
    <property type="project" value="UniProtKB-UniRule"/>
</dbReference>
<dbReference type="GO" id="GO:0006412">
    <property type="term" value="P:translation"/>
    <property type="evidence" value="ECO:0007669"/>
    <property type="project" value="UniProtKB-UniRule"/>
</dbReference>
<dbReference type="CDD" id="cd01425">
    <property type="entry name" value="RPS2"/>
    <property type="match status" value="1"/>
</dbReference>
<dbReference type="FunFam" id="3.40.50.10490:FF:000010">
    <property type="entry name" value="40S ribosomal protein S0"/>
    <property type="match status" value="1"/>
</dbReference>
<dbReference type="Gene3D" id="3.40.50.10490">
    <property type="entry name" value="Glucose-6-phosphate isomerase like protein, domain 1"/>
    <property type="match status" value="1"/>
</dbReference>
<dbReference type="HAMAP" id="MF_03015">
    <property type="entry name" value="Ribosomal_S2_euk"/>
    <property type="match status" value="1"/>
</dbReference>
<dbReference type="InterPro" id="IPR001865">
    <property type="entry name" value="Ribosomal_uS2"/>
</dbReference>
<dbReference type="InterPro" id="IPR018130">
    <property type="entry name" value="Ribosomal_uS2_CS"/>
</dbReference>
<dbReference type="InterPro" id="IPR027498">
    <property type="entry name" value="Ribosomal_uS2_euk"/>
</dbReference>
<dbReference type="InterPro" id="IPR005707">
    <property type="entry name" value="Ribosomal_uS2_euk/arc"/>
</dbReference>
<dbReference type="InterPro" id="IPR023591">
    <property type="entry name" value="Ribosomal_uS2_flav_dom_sf"/>
</dbReference>
<dbReference type="NCBIfam" id="TIGR01012">
    <property type="entry name" value="uS2_euk_arch"/>
    <property type="match status" value="1"/>
</dbReference>
<dbReference type="PANTHER" id="PTHR11489">
    <property type="entry name" value="40S RIBOSOMAL PROTEIN SA"/>
    <property type="match status" value="1"/>
</dbReference>
<dbReference type="Pfam" id="PF00318">
    <property type="entry name" value="Ribosomal_S2"/>
    <property type="match status" value="2"/>
</dbReference>
<dbReference type="PRINTS" id="PR00395">
    <property type="entry name" value="RIBOSOMALS2"/>
</dbReference>
<dbReference type="SUPFAM" id="SSF52313">
    <property type="entry name" value="Ribosomal protein S2"/>
    <property type="match status" value="1"/>
</dbReference>
<dbReference type="PROSITE" id="PS00962">
    <property type="entry name" value="RIBOSOMAL_S2_1"/>
    <property type="match status" value="1"/>
</dbReference>
<dbReference type="PROSITE" id="PS00963">
    <property type="entry name" value="RIBOSOMAL_S2_2"/>
    <property type="match status" value="1"/>
</dbReference>
<keyword id="KW-0007">Acetylation</keyword>
<keyword id="KW-0963">Cytoplasm</keyword>
<keyword id="KW-0687">Ribonucleoprotein</keyword>
<keyword id="KW-0689">Ribosomal protein</keyword>
<name>RSSA1_YEAS1</name>
<comment type="function">
    <text evidence="2">Required for the assembly and/or stability of the 40S ribosomal subunit. Required for the processing of the 20S rRNA-precursor to mature 18S rRNA in a late step of the maturation of 40S ribosomal subunits.</text>
</comment>
<comment type="subunit">
    <text evidence="2">Component of the small ribosomal subunit. Mature ribosomes consist of a small (40S) and a large (60S) subunit. The 40S subunit contains about 33 different proteins and 1 molecule of RNA (18S). The 60S subunit contains about 49 different proteins and 3 molecules of RNA (25S, 5.8S and 5S). Interacts with RPS21.</text>
</comment>
<comment type="subcellular location">
    <subcellularLocation>
        <location evidence="2">Cytoplasm</location>
    </subcellularLocation>
</comment>
<comment type="similarity">
    <text evidence="2">Belongs to the universal ribosomal protein uS2 family.</text>
</comment>
<feature type="initiator methionine" description="Removed" evidence="2">
    <location>
        <position position="1"/>
    </location>
</feature>
<feature type="chain" id="PRO_0000371645" description="Small ribosomal subunit protein uS2A">
    <location>
        <begin position="2"/>
        <end position="252"/>
    </location>
</feature>
<feature type="region of interest" description="Disordered" evidence="3">
    <location>
        <begin position="209"/>
        <end position="252"/>
    </location>
</feature>
<feature type="compositionally biased region" description="Acidic residues" evidence="3">
    <location>
        <begin position="218"/>
        <end position="252"/>
    </location>
</feature>
<feature type="modified residue" description="N-acetylserine" evidence="1 2">
    <location>
        <position position="2"/>
    </location>
</feature>
<sequence length="252" mass="28024">MSLPATFDLTPEDAQLLLAANTHLGARNVQVHQEPYVFNARPDGVHVINVGKTWEKLVLAARIIAAIPNPEDVVAISSRTFGQRAVLKFAAHTGATPIAGRFTPGSFTNYITRSFKEPRLVIVTDPRSDAQAIKEASYVNIPVIALTDLDSPSEFVDVAIPCNNRGKHSIGLIWYLLAREVLRLRGALVDRTQPWSIMPDLYFYRDPEEVEQQVAEEATTEEAGEEEAKEEVTEEQAEATEWAEENADNVEW</sequence>
<evidence type="ECO:0000250" key="1">
    <source>
        <dbReference type="UniProtKB" id="P32905"/>
    </source>
</evidence>
<evidence type="ECO:0000255" key="2">
    <source>
        <dbReference type="HAMAP-Rule" id="MF_03015"/>
    </source>
</evidence>
<evidence type="ECO:0000256" key="3">
    <source>
        <dbReference type="SAM" id="MobiDB-lite"/>
    </source>
</evidence>
<evidence type="ECO:0000305" key="4"/>
<gene>
    <name evidence="2" type="primary">RPS0A</name>
    <name type="synonym">NAB1</name>
    <name type="synonym">NAB1A</name>
    <name type="synonym">YST1</name>
    <name type="ORF">SCRG_00807</name>
</gene>
<proteinExistence type="inferred from homology"/>
<organism>
    <name type="scientific">Saccharomyces cerevisiae (strain RM11-1a)</name>
    <name type="common">Baker's yeast</name>
    <dbReference type="NCBI Taxonomy" id="285006"/>
    <lineage>
        <taxon>Eukaryota</taxon>
        <taxon>Fungi</taxon>
        <taxon>Dikarya</taxon>
        <taxon>Ascomycota</taxon>
        <taxon>Saccharomycotina</taxon>
        <taxon>Saccharomycetes</taxon>
        <taxon>Saccharomycetales</taxon>
        <taxon>Saccharomycetaceae</taxon>
        <taxon>Saccharomyces</taxon>
    </lineage>
</organism>
<reference key="1">
    <citation type="submission" date="2005-03" db="EMBL/GenBank/DDBJ databases">
        <title>Annotation of the Saccharomyces cerevisiae RM11-1a genome.</title>
        <authorList>
            <consortium name="The Broad Institute Genome Sequencing Platform"/>
            <person name="Birren B.W."/>
            <person name="Lander E.S."/>
            <person name="Galagan J.E."/>
            <person name="Nusbaum C."/>
            <person name="Devon K."/>
            <person name="Cuomo C."/>
            <person name="Jaffe D.B."/>
            <person name="Butler J."/>
            <person name="Alvarez P."/>
            <person name="Gnerre S."/>
            <person name="Grabherr M."/>
            <person name="Kleber M."/>
            <person name="Mauceli E.W."/>
            <person name="Brockman W."/>
            <person name="MacCallum I.A."/>
            <person name="Rounsley S."/>
            <person name="Young S.K."/>
            <person name="LaButti K."/>
            <person name="Pushparaj V."/>
            <person name="DeCaprio D."/>
            <person name="Crawford M."/>
            <person name="Koehrsen M."/>
            <person name="Engels R."/>
            <person name="Montgomery P."/>
            <person name="Pearson M."/>
            <person name="Howarth C."/>
            <person name="Larson L."/>
            <person name="Luoma S."/>
            <person name="White J."/>
            <person name="O'Leary S."/>
            <person name="Kodira C.D."/>
            <person name="Zeng Q."/>
            <person name="Yandava C."/>
            <person name="Alvarado L."/>
            <person name="Pratt S."/>
            <person name="Kruglyak L."/>
        </authorList>
    </citation>
    <scope>NUCLEOTIDE SEQUENCE [LARGE SCALE GENOMIC DNA]</scope>
    <source>
        <strain>RM11-1a</strain>
    </source>
</reference>
<accession>B3LI22</accession>